<organism>
    <name type="scientific">Felis catus</name>
    <name type="common">Cat</name>
    <name type="synonym">Felis silvestris catus</name>
    <dbReference type="NCBI Taxonomy" id="9685"/>
    <lineage>
        <taxon>Eukaryota</taxon>
        <taxon>Metazoa</taxon>
        <taxon>Chordata</taxon>
        <taxon>Craniata</taxon>
        <taxon>Vertebrata</taxon>
        <taxon>Euteleostomi</taxon>
        <taxon>Mammalia</taxon>
        <taxon>Eutheria</taxon>
        <taxon>Laurasiatheria</taxon>
        <taxon>Carnivora</taxon>
        <taxon>Feliformia</taxon>
        <taxon>Felidae</taxon>
        <taxon>Felinae</taxon>
        <taxon>Felis</taxon>
    </lineage>
</organism>
<feature type="propeptide" id="PRO_0000252354" evidence="1">
    <location>
        <begin position="1"/>
        <end position="35"/>
    </location>
</feature>
<feature type="chain" id="PRO_0000252355" description="Interleukin-18">
    <location>
        <begin position="36"/>
        <end position="192"/>
    </location>
</feature>
<feature type="site" description="Cleavage; by CASP1, CASP4 and CASP5" evidence="2">
    <location>
        <begin position="35"/>
        <end position="36"/>
    </location>
</feature>
<feature type="site" description="Cleavage; by CASP3" evidence="2">
    <location>
        <begin position="70"/>
        <end position="71"/>
    </location>
</feature>
<feature type="sequence conflict" description="In Ref. 2; BAC65243." evidence="3" ref="2">
    <original>I</original>
    <variation>E</variation>
    <location>
        <position position="4"/>
    </location>
</feature>
<feature type="sequence conflict" description="In Ref. 2; BAC65243." evidence="3" ref="2">
    <original>D</original>
    <variation>E</variation>
    <location>
        <position position="7"/>
    </location>
</feature>
<feature type="sequence conflict" description="In Ref. 2; BAC65243." evidence="3" ref="2">
    <original>N</original>
    <variation>S</variation>
    <location>
        <position position="192"/>
    </location>
</feature>
<accession>Q95M33</accession>
<accession>Q865B8</accession>
<evidence type="ECO:0000250" key="1">
    <source>
        <dbReference type="UniProtKB" id="P70380"/>
    </source>
</evidence>
<evidence type="ECO:0000250" key="2">
    <source>
        <dbReference type="UniProtKB" id="Q14116"/>
    </source>
</evidence>
<evidence type="ECO:0000305" key="3"/>
<gene>
    <name type="primary">IL18</name>
    <name type="synonym">IGIF</name>
</gene>
<protein>
    <recommendedName>
        <fullName>Interleukin-18</fullName>
        <shortName>IL-18</shortName>
    </recommendedName>
    <alternativeName>
        <fullName>Interferon gamma-inducing factor</fullName>
        <shortName>IFN-gamma-inducing factor</shortName>
    </alternativeName>
    <alternativeName>
        <fullName>Interleukin-1 gamma</fullName>
        <shortName>IL-1 gamma</shortName>
    </alternativeName>
</protein>
<sequence>MAAIPVDDCINFVGMKFIDNTLYFVADSDENLETDYFGKLEHKLSILRNLNDQVLFINQGDQPVFEDMPDSDCTDNAPRTEFIIYMYKDSLTRGLAVTISVNYKTMSTLSCENKIISFKEMSPPESINDEGNDIIFFQRSVPGHDDKIQFESSLYKGYFLACEKEKDLFKLILKKKDENGDKSIMFTVQNKN</sequence>
<comment type="function">
    <text evidence="2">Pro-inflammatory cytokine primarily involved in epithelial barrier repair, polarized T-helper 1 (Th1) cell and natural killer (NK) cell immune responses. Upon binding to IL18R1 and IL18RAP, forms a signaling ternary complex which activates NF-kappa-B, triggering synthesis of inflammatory mediators. Synergizes with IL12/interleukin-12 to induce IFNG synthesis from T-helper 1 (Th1) cells and natural killer (NK) cells. Involved in transduction of inflammation downstream of pyroptosis: its mature form is specifically released in the extracellular milieu by passing through the gasdermin-D (GSDMD) pore.</text>
</comment>
<comment type="subunit">
    <text evidence="2">Forms a ternary complex with ligand-binding receptor subunit IL18R1 and signaling receptor subunit IL18RAP at the plasma membrane. Mature IL18 first binds to IL18R1 forming a low affinity binary complex, which then interacts with IL18RAP to form a high affinity ternary complex that signals inside the cell. Interacts with cargo receptor TMED10; the interaction mediates the translocation from the cytoplasm into the ERGIC (endoplasmic reticulum-Golgi intermediate compartment) and thereby secretion.</text>
</comment>
<comment type="subcellular location">
    <subcellularLocation>
        <location evidence="2">Cytoplasm</location>
        <location evidence="2">Cytosol</location>
    </subcellularLocation>
    <subcellularLocation>
        <location evidence="2">Secreted</location>
    </subcellularLocation>
    <text evidence="2">The precursor is cytosolic. In response to inflammasome-activating signals, cleaved and secreted. Mature form is secreted and released in the extracellular milieu by passing through the gasdermin-D (GSDMD) pore. In contrast, the precursor form is not released, due to the presence of an acidic region that is proteolytically removed by CASP1, CASP4 or CASP5 during maturation. The secretion is dependent on protein unfolding and facilitated by the cargo receptor TMED10.</text>
</comment>
<comment type="PTM">
    <text evidence="2">The pro-IL-18 precursor is processed by CASP1, CASP4 or CASP5 to yield its mature, active form. The pro-IL-18 precursor features autoinhibitory interactions between the propeptide and the post-cleavage-site region, preventing recognition by the IL18R1 receptor. Processing by CASP1, CASP4 or CASP5 induces conformational changes to generate critical receptor-binding sites. The mature form is then secreted and released in the extracellular milieu by passing through the gasdermin-D (GSDMD) pore. In contrast, cleavage by CASP3 inactivates IL18.</text>
</comment>
<comment type="similarity">
    <text evidence="3">Belongs to the IL-1 family.</text>
</comment>
<name>IL18_FELCA</name>
<keyword id="KW-0202">Cytokine</keyword>
<keyword id="KW-0963">Cytoplasm</keyword>
<keyword id="KW-0395">Inflammatory response</keyword>
<keyword id="KW-1185">Reference proteome</keyword>
<keyword id="KW-0964">Secreted</keyword>
<reference key="1">
    <citation type="submission" date="1997-06" db="EMBL/GenBank/DDBJ databases">
        <title>Nucleotide sequence of feline IGIF cDNA.</title>
        <authorList>
            <person name="Hanlon L."/>
            <person name="McGillivray C.P."/>
            <person name="Argyle D.J.A."/>
            <person name="Nicolson L."/>
            <person name="Onions D.E."/>
        </authorList>
    </citation>
    <scope>NUCLEOTIDE SEQUENCE [MRNA]</scope>
    <source>
        <tissue>Alveolar macrophage</tissue>
    </source>
</reference>
<reference key="2">
    <citation type="submission" date="2001-03" db="EMBL/GenBank/DDBJ databases">
        <title>Feline interleukin-18.</title>
        <authorList>
            <person name="Kuwahara C."/>
            <person name="Kawakami K."/>
            <person name="Kishi M."/>
            <person name="Mochizuki M."/>
        </authorList>
    </citation>
    <scope>NUCLEOTIDE SEQUENCE [MRNA]</scope>
</reference>
<reference key="3">
    <citation type="submission" date="2005-06" db="EMBL/GenBank/DDBJ databases">
        <title>Cloning and sequence analysis of feline IL-18 gene.</title>
        <authorList>
            <person name="Qiao J."/>
            <person name="Xia X."/>
            <person name="Yang S."/>
        </authorList>
    </citation>
    <scope>NUCLEOTIDE SEQUENCE [MRNA]</scope>
    <source>
        <tissue>Lymphocyte</tissue>
    </source>
</reference>
<proteinExistence type="evidence at transcript level"/>
<dbReference type="EMBL" id="Y13923">
    <property type="protein sequence ID" value="CAC42918.1"/>
    <property type="molecule type" value="mRNA"/>
</dbReference>
<dbReference type="EMBL" id="AB056857">
    <property type="protein sequence ID" value="BAC65243.1"/>
    <property type="molecule type" value="mRNA"/>
</dbReference>
<dbReference type="EMBL" id="DQ100372">
    <property type="protein sequence ID" value="AAY96319.1"/>
    <property type="molecule type" value="mRNA"/>
</dbReference>
<dbReference type="RefSeq" id="NP_001009213.2">
    <property type="nucleotide sequence ID" value="NM_001009213.2"/>
</dbReference>
<dbReference type="SMR" id="Q95M33"/>
<dbReference type="FunCoup" id="Q95M33">
    <property type="interactions" value="42"/>
</dbReference>
<dbReference type="STRING" id="9685.ENSFCAP00000027095"/>
<dbReference type="PaxDb" id="9685-ENSFCAP00000017529"/>
<dbReference type="GeneID" id="493688"/>
<dbReference type="KEGG" id="fca:493688"/>
<dbReference type="CTD" id="3606"/>
<dbReference type="eggNOG" id="ENOG502SDJZ">
    <property type="taxonomic scope" value="Eukaryota"/>
</dbReference>
<dbReference type="InParanoid" id="Q95M33"/>
<dbReference type="OrthoDB" id="8535973at2759"/>
<dbReference type="Proteomes" id="UP000011712">
    <property type="component" value="Unplaced"/>
</dbReference>
<dbReference type="GO" id="GO:0005829">
    <property type="term" value="C:cytosol"/>
    <property type="evidence" value="ECO:0007669"/>
    <property type="project" value="UniProtKB-SubCell"/>
</dbReference>
<dbReference type="GO" id="GO:0005615">
    <property type="term" value="C:extracellular space"/>
    <property type="evidence" value="ECO:0000318"/>
    <property type="project" value="GO_Central"/>
</dbReference>
<dbReference type="GO" id="GO:0005125">
    <property type="term" value="F:cytokine activity"/>
    <property type="evidence" value="ECO:0000250"/>
    <property type="project" value="UniProtKB"/>
</dbReference>
<dbReference type="GO" id="GO:0045515">
    <property type="term" value="F:interleukin-18 receptor binding"/>
    <property type="evidence" value="ECO:0000250"/>
    <property type="project" value="UniProtKB"/>
</dbReference>
<dbReference type="GO" id="GO:0071222">
    <property type="term" value="P:cellular response to lipopolysaccharide"/>
    <property type="evidence" value="ECO:0000318"/>
    <property type="project" value="GO_Central"/>
</dbReference>
<dbReference type="GO" id="GO:0019221">
    <property type="term" value="P:cytokine-mediated signaling pathway"/>
    <property type="evidence" value="ECO:0000318"/>
    <property type="project" value="GO_Central"/>
</dbReference>
<dbReference type="GO" id="GO:0050830">
    <property type="term" value="P:defense response to Gram-positive bacterium"/>
    <property type="evidence" value="ECO:0000250"/>
    <property type="project" value="UniProtKB"/>
</dbReference>
<dbReference type="GO" id="GO:0061436">
    <property type="term" value="P:establishment of skin barrier"/>
    <property type="evidence" value="ECO:0000250"/>
    <property type="project" value="UniProtKB"/>
</dbReference>
<dbReference type="GO" id="GO:0006955">
    <property type="term" value="P:immune response"/>
    <property type="evidence" value="ECO:0000318"/>
    <property type="project" value="GO_Central"/>
</dbReference>
<dbReference type="GO" id="GO:0006954">
    <property type="term" value="P:inflammatory response"/>
    <property type="evidence" value="ECO:0000318"/>
    <property type="project" value="GO_Central"/>
</dbReference>
<dbReference type="GO" id="GO:0035655">
    <property type="term" value="P:interleukin-18-mediated signaling pathway"/>
    <property type="evidence" value="ECO:0000250"/>
    <property type="project" value="UniProtKB"/>
</dbReference>
<dbReference type="GO" id="GO:0050729">
    <property type="term" value="P:positive regulation of inflammatory response"/>
    <property type="evidence" value="ECO:0000250"/>
    <property type="project" value="UniProtKB"/>
</dbReference>
<dbReference type="GO" id="GO:0051092">
    <property type="term" value="P:positive regulation of NF-kappaB transcription factor activity"/>
    <property type="evidence" value="ECO:0000250"/>
    <property type="project" value="UniProtKB"/>
</dbReference>
<dbReference type="GO" id="GO:2000556">
    <property type="term" value="P:positive regulation of T-helper 1 cell cytokine production"/>
    <property type="evidence" value="ECO:0000250"/>
    <property type="project" value="UniProtKB"/>
</dbReference>
<dbReference type="GO" id="GO:0032729">
    <property type="term" value="P:positive regulation of type II interferon production"/>
    <property type="evidence" value="ECO:0000250"/>
    <property type="project" value="UniProtKB"/>
</dbReference>
<dbReference type="CDD" id="cd23298">
    <property type="entry name" value="beta-trefoil_IL18"/>
    <property type="match status" value="1"/>
</dbReference>
<dbReference type="FunFam" id="2.80.10.50:FF:000043">
    <property type="entry name" value="Interleukin-18"/>
    <property type="match status" value="1"/>
</dbReference>
<dbReference type="Gene3D" id="2.80.10.50">
    <property type="match status" value="1"/>
</dbReference>
<dbReference type="InterPro" id="IPR015529">
    <property type="entry name" value="IL-18"/>
</dbReference>
<dbReference type="InterPro" id="IPR000975">
    <property type="entry name" value="IL-1_fam"/>
</dbReference>
<dbReference type="InterPro" id="IPR008996">
    <property type="entry name" value="IL1/FGF"/>
</dbReference>
<dbReference type="PANTHER" id="PTHR10078">
    <property type="entry name" value="INTERLEUKIN-1 FAMILY MEMBER"/>
    <property type="match status" value="1"/>
</dbReference>
<dbReference type="PANTHER" id="PTHR10078:SF35">
    <property type="entry name" value="INTERLEUKIN-18"/>
    <property type="match status" value="1"/>
</dbReference>
<dbReference type="Pfam" id="PF00340">
    <property type="entry name" value="IL1"/>
    <property type="match status" value="1"/>
</dbReference>
<dbReference type="PIRSF" id="PIRSF015162">
    <property type="entry name" value="Interleukin_18"/>
    <property type="match status" value="1"/>
</dbReference>
<dbReference type="PRINTS" id="PR01933">
    <property type="entry name" value="INTRLEUKIN18"/>
</dbReference>
<dbReference type="SUPFAM" id="SSF50353">
    <property type="entry name" value="Cytokine"/>
    <property type="match status" value="1"/>
</dbReference>